<sequence length="235" mass="26970">MKFLLRLLSKLLCRIKLFSNRLYYIGGNDALPPPLSKDEEDDLVNKLVNGDESIRSILIERNLRLVVYIARKFENTGVGVEDLISVGTIGLIKAVNTFDPTKKIKLATYGSRCIENEILMYLRRNSKVKAEISFYEPLNIDWDGNKLLLSDILGTDNDCVYNLIEGEVDKQLLLFALKKLNEREKRIVELRYGLTGVGEKTQKEVADMLGISQSYISRLEKRIIKRLKKEINKML</sequence>
<feature type="chain" id="PRO_0000093941" description="RNA polymerase sigma-E factor">
    <location>
        <begin position="1"/>
        <end position="235"/>
    </location>
</feature>
<feature type="DNA-binding region" description="H-T-H motif" evidence="1">
    <location>
        <begin position="202"/>
        <end position="221"/>
    </location>
</feature>
<feature type="short sequence motif" description="Polymerase core binding">
    <location>
        <begin position="82"/>
        <end position="95"/>
    </location>
</feature>
<feature type="sequence conflict" description="In Ref. 4; CAA80617." evidence="2" ref="4">
    <original>L</original>
    <variation>P</variation>
    <location>
        <position position="147"/>
    </location>
</feature>
<organism>
    <name type="scientific">Clostridium acetobutylicum (strain ATCC 824 / DSM 792 / JCM 1419 / IAM 19013 / LMG 5710 / NBRC 13948 / NRRL B-527 / VKM B-1787 / 2291 / W)</name>
    <dbReference type="NCBI Taxonomy" id="272562"/>
    <lineage>
        <taxon>Bacteria</taxon>
        <taxon>Bacillati</taxon>
        <taxon>Bacillota</taxon>
        <taxon>Clostridia</taxon>
        <taxon>Eubacteriales</taxon>
        <taxon>Clostridiaceae</taxon>
        <taxon>Clostridium</taxon>
    </lineage>
</organism>
<protein>
    <recommendedName>
        <fullName>RNA polymerase sigma-E factor</fullName>
    </recommendedName>
    <alternativeName>
        <fullName>Stage II sporulation protein GB</fullName>
    </alternativeName>
</protein>
<gene>
    <name type="primary">sigE</name>
    <name type="synonym">spoIIGB</name>
    <name type="ordered locus">CA_C1695</name>
</gene>
<proteinExistence type="inferred from homology"/>
<comment type="function">
    <text evidence="1">Sigma factors are initiation factors that promote the attachment of RNA polymerase to specific initiation sites and are then released. This sigma factor is responsible for the expression of sporulation specific genes (By similarity).</text>
</comment>
<comment type="similarity">
    <text evidence="2">Belongs to the sigma-70 factor family.</text>
</comment>
<evidence type="ECO:0000250" key="1"/>
<evidence type="ECO:0000305" key="2"/>
<name>RPSE_CLOAB</name>
<keyword id="KW-0238">DNA-binding</keyword>
<keyword id="KW-1185">Reference proteome</keyword>
<keyword id="KW-0731">Sigma factor</keyword>
<keyword id="KW-0749">Sporulation</keyword>
<keyword id="KW-0804">Transcription</keyword>
<keyword id="KW-0805">Transcription regulation</keyword>
<dbReference type="EMBL" id="U07420">
    <property type="protein sequence ID" value="AAC43309.1"/>
    <property type="molecule type" value="Genomic_DNA"/>
</dbReference>
<dbReference type="EMBL" id="Z23079">
    <property type="protein sequence ID" value="CAA80617.1"/>
    <property type="molecule type" value="Genomic_DNA"/>
</dbReference>
<dbReference type="EMBL" id="AE001437">
    <property type="protein sequence ID" value="AAK79661.1"/>
    <property type="molecule type" value="Genomic_DNA"/>
</dbReference>
<dbReference type="PIR" id="B97109">
    <property type="entry name" value="B97109"/>
</dbReference>
<dbReference type="PIR" id="I40627">
    <property type="entry name" value="I40627"/>
</dbReference>
<dbReference type="RefSeq" id="NP_348321.1">
    <property type="nucleotide sequence ID" value="NC_003030.1"/>
</dbReference>
<dbReference type="RefSeq" id="WP_010965002.1">
    <property type="nucleotide sequence ID" value="NC_003030.1"/>
</dbReference>
<dbReference type="SMR" id="P33657"/>
<dbReference type="STRING" id="272562.CA_C1695"/>
<dbReference type="GeneID" id="44998190"/>
<dbReference type="KEGG" id="cac:CA_C1695"/>
<dbReference type="PATRIC" id="fig|272562.8.peg.1898"/>
<dbReference type="eggNOG" id="COG1191">
    <property type="taxonomic scope" value="Bacteria"/>
</dbReference>
<dbReference type="HOGENOM" id="CLU_014793_8_7_9"/>
<dbReference type="OrthoDB" id="9809557at2"/>
<dbReference type="Proteomes" id="UP000000814">
    <property type="component" value="Chromosome"/>
</dbReference>
<dbReference type="GO" id="GO:0003677">
    <property type="term" value="F:DNA binding"/>
    <property type="evidence" value="ECO:0007669"/>
    <property type="project" value="UniProtKB-KW"/>
</dbReference>
<dbReference type="GO" id="GO:0016987">
    <property type="term" value="F:sigma factor activity"/>
    <property type="evidence" value="ECO:0007669"/>
    <property type="project" value="UniProtKB-KW"/>
</dbReference>
<dbReference type="GO" id="GO:0006352">
    <property type="term" value="P:DNA-templated transcription initiation"/>
    <property type="evidence" value="ECO:0007669"/>
    <property type="project" value="InterPro"/>
</dbReference>
<dbReference type="GO" id="GO:0030435">
    <property type="term" value="P:sporulation resulting in formation of a cellular spore"/>
    <property type="evidence" value="ECO:0007669"/>
    <property type="project" value="UniProtKB-KW"/>
</dbReference>
<dbReference type="CDD" id="cd06171">
    <property type="entry name" value="Sigma70_r4"/>
    <property type="match status" value="1"/>
</dbReference>
<dbReference type="FunFam" id="1.20.120.1810:FF:000003">
    <property type="entry name" value="RNA polymerase sigma factor"/>
    <property type="match status" value="1"/>
</dbReference>
<dbReference type="Gene3D" id="1.20.120.1810">
    <property type="match status" value="1"/>
</dbReference>
<dbReference type="Gene3D" id="1.10.10.10">
    <property type="entry name" value="Winged helix-like DNA-binding domain superfamily/Winged helix DNA-binding domain"/>
    <property type="match status" value="1"/>
</dbReference>
<dbReference type="InterPro" id="IPR001387">
    <property type="entry name" value="Cro/C1-type_HTH"/>
</dbReference>
<dbReference type="InterPro" id="IPR014284">
    <property type="entry name" value="RNA_pol_sigma-70_dom"/>
</dbReference>
<dbReference type="InterPro" id="IPR014200">
    <property type="entry name" value="RNA_pol_sigma-E"/>
</dbReference>
<dbReference type="InterPro" id="IPR000943">
    <property type="entry name" value="RNA_pol_sigma70"/>
</dbReference>
<dbReference type="InterPro" id="IPR007627">
    <property type="entry name" value="RNA_pol_sigma70_r2"/>
</dbReference>
<dbReference type="InterPro" id="IPR007630">
    <property type="entry name" value="RNA_pol_sigma70_r4"/>
</dbReference>
<dbReference type="InterPro" id="IPR013325">
    <property type="entry name" value="RNA_pol_sigma_r2"/>
</dbReference>
<dbReference type="InterPro" id="IPR013324">
    <property type="entry name" value="RNA_pol_sigma_r3/r4-like"/>
</dbReference>
<dbReference type="InterPro" id="IPR050813">
    <property type="entry name" value="Sigma-70_Factor"/>
</dbReference>
<dbReference type="InterPro" id="IPR036388">
    <property type="entry name" value="WH-like_DNA-bd_sf"/>
</dbReference>
<dbReference type="NCBIfam" id="NF004471">
    <property type="entry name" value="PRK05803.1"/>
    <property type="match status" value="1"/>
</dbReference>
<dbReference type="NCBIfam" id="NF006158">
    <property type="entry name" value="PRK08301.1"/>
    <property type="match status" value="1"/>
</dbReference>
<dbReference type="NCBIfam" id="TIGR02937">
    <property type="entry name" value="sigma70-ECF"/>
    <property type="match status" value="1"/>
</dbReference>
<dbReference type="NCBIfam" id="TIGR02835">
    <property type="entry name" value="spore_sigmaE"/>
    <property type="match status" value="1"/>
</dbReference>
<dbReference type="PANTHER" id="PTHR30376:SF3">
    <property type="entry name" value="RNA POLYMERASE SIGMA FACTOR RPOH"/>
    <property type="match status" value="1"/>
</dbReference>
<dbReference type="PANTHER" id="PTHR30376">
    <property type="entry name" value="SIGMA FACTOR RPOH HEAT SHOCK RELATED"/>
    <property type="match status" value="1"/>
</dbReference>
<dbReference type="Pfam" id="PF04542">
    <property type="entry name" value="Sigma70_r2"/>
    <property type="match status" value="1"/>
</dbReference>
<dbReference type="Pfam" id="PF04545">
    <property type="entry name" value="Sigma70_r4"/>
    <property type="match status" value="1"/>
</dbReference>
<dbReference type="PIRSF" id="PIRSF000770">
    <property type="entry name" value="RNA_pol_sigma-SigE/K"/>
    <property type="match status" value="1"/>
</dbReference>
<dbReference type="PRINTS" id="PR00046">
    <property type="entry name" value="SIGMA70FCT"/>
</dbReference>
<dbReference type="SUPFAM" id="SSF88946">
    <property type="entry name" value="Sigma2 domain of RNA polymerase sigma factors"/>
    <property type="match status" value="1"/>
</dbReference>
<dbReference type="SUPFAM" id="SSF88659">
    <property type="entry name" value="Sigma3 and sigma4 domains of RNA polymerase sigma factors"/>
    <property type="match status" value="1"/>
</dbReference>
<dbReference type="PROSITE" id="PS00715">
    <property type="entry name" value="SIGMA70_1"/>
    <property type="match status" value="1"/>
</dbReference>
<dbReference type="PROSITE" id="PS00716">
    <property type="entry name" value="SIGMA70_2"/>
    <property type="match status" value="1"/>
</dbReference>
<accession>P33657</accession>
<reference key="1">
    <citation type="journal article" date="1995" name="Gene">
        <title>Sequence and arrangement of genes encoding sigma factors in Clostridium acetobutylicum ATCC 824.</title>
        <authorList>
            <person name="Wong J."/>
            <person name="Sass C."/>
            <person name="Bennett G.N."/>
        </authorList>
    </citation>
    <scope>NUCLEOTIDE SEQUENCE [GENOMIC DNA]</scope>
    <source>
        <strain>ATCC 824 / DSM 792 / JCM 1419 / IAM 19013 / LMG 5710 / NBRC 13948 / NRRL B-527 / VKM B-1787 / 2291 / W</strain>
    </source>
</reference>
<reference key="2">
    <citation type="journal article" date="1998" name="FEMS Microbiol. Lett.">
        <title>Sporulation and time course expression of sigma-factor homologous genes in Clostridium acetobutylicum.</title>
        <authorList>
            <person name="Santangelo J.D."/>
            <person name="Kuhn A."/>
            <person name="Treuner-Lange A."/>
            <person name="Durre P."/>
        </authorList>
    </citation>
    <scope>NUCLEOTIDE SEQUENCE [GENOMIC DNA]</scope>
    <source>
        <strain>ATCC 824 / DSM 792 / JCM 1419 / IAM 19013 / LMG 5710 / NBRC 13948 / NRRL B-527 / VKM B-1787 / 2291 / W</strain>
    </source>
</reference>
<reference key="3">
    <citation type="journal article" date="2001" name="J. Bacteriol.">
        <title>Genome sequence and comparative analysis of the solvent-producing bacterium Clostridium acetobutylicum.</title>
        <authorList>
            <person name="Noelling J."/>
            <person name="Breton G."/>
            <person name="Omelchenko M.V."/>
            <person name="Makarova K.S."/>
            <person name="Zeng Q."/>
            <person name="Gibson R."/>
            <person name="Lee H.M."/>
            <person name="Dubois J."/>
            <person name="Qiu D."/>
            <person name="Hitti J."/>
            <person name="Wolf Y.I."/>
            <person name="Tatusov R.L."/>
            <person name="Sabathe F."/>
            <person name="Doucette-Stamm L.A."/>
            <person name="Soucaille P."/>
            <person name="Daly M.J."/>
            <person name="Bennett G.N."/>
            <person name="Koonin E.V."/>
            <person name="Smith D.R."/>
        </authorList>
    </citation>
    <scope>NUCLEOTIDE SEQUENCE [LARGE SCALE GENOMIC DNA]</scope>
    <source>
        <strain>ATCC 824 / DSM 792 / JCM 1419 / IAM 19013 / LMG 5710 / NBRC 13948 / NRRL B-527 / VKM B-1787 / 2291 / W</strain>
    </source>
</reference>
<reference key="4">
    <citation type="journal article" date="1994" name="J. Bacteriol.">
        <title>Sporulation and primary sigma factor homologous genes in Clostridium acetobutylicum.</title>
        <authorList>
            <person name="Sauer U."/>
            <person name="Treuner A."/>
            <person name="Buchholz M."/>
            <person name="Santangelo J.D."/>
            <person name="Durre P."/>
        </authorList>
    </citation>
    <scope>NUCLEOTIDE SEQUENCE [GENOMIC DNA] OF 46-235</scope>
    <source>
        <strain>ATCC 824 / DSM 792 / JCM 1419 / IAM 19013 / LMG 5710 / NBRC 13948 / NRRL B-527 / VKM B-1787 / 2291 / W</strain>
    </source>
</reference>